<sequence>MNNGIDPENETNKKGAIGKNPEEKITVEQTNTKNNLQEHGKMENMDQHHTHGHMERHQQMDHGHMSGMDHSHMDHEDMSGMNHSHMGHENMSGMDHSMHMGNFKQKFWLSLILAIPIILFSPMMGMSFPFQVTFPGSNWVVLVLATILFIYGGQPFLSGAKMELKQKSPAMMTLIAMGITVAYVYSVYSFIANLINPHTHVMDFFWELATLIVIMLLGHWIEMNAVSNASDALQKLAELLPESVKRLKKDGTEETVSLKEVHEGDRLIVRAGDKMPTDGTIDKGHTIVDESAVTGESKGVKKQVGDSVIGGSINGDGTIEITVTGTGENGYLAKVMEMVRKAQGEKSKLEFLSDKVAKWLFYVALVVGIIAFIAWLFLANLPDALERMVTVFIIACPHALGLAIPLVVARSTSIAAKNGLLLKNRNAMEQANDLDVIMLDKTGTLTQGKFTVTGIEILDEAYQEEEILKYIGALEAHANHPLAIGIMNYLKEKKITPYQAQEQKNLAGVGLEATVEDKDVKIINEKEAKRLGLKIDPERLKNYEAQGNTVSFLVVSDKLVAVIALGDVIKPEAKEFIQAIKEKNIIPVMLTGDNPKAAQAVAEYLGINEYYGGLLPDDKEAIVQRYLDQGKKVIMVGDGINDAPSLARATIGMAIGAGTDIAIDSADVVLTNSDPKDILHFLELAKETRRKMIQNLWWGAGYNIIAIPLAAGILAPIGLILSPAVGAVLMSLSTVVVALNALTLK</sequence>
<name>COPB_ENTHA</name>
<evidence type="ECO:0000250" key="1"/>
<evidence type="ECO:0000255" key="2"/>
<evidence type="ECO:0000256" key="3">
    <source>
        <dbReference type="SAM" id="MobiDB-lite"/>
    </source>
</evidence>
<evidence type="ECO:0000269" key="4">
    <source>
    </source>
</evidence>
<evidence type="ECO:0000269" key="5">
    <source>
    </source>
</evidence>
<evidence type="ECO:0000269" key="6">
    <source>
    </source>
</evidence>
<evidence type="ECO:0000305" key="7"/>
<proteinExistence type="evidence at protein level"/>
<reference key="1">
    <citation type="journal article" date="1993" name="J. Biol. Chem.">
        <title>Primary structure of two P-type ATPases involved in copper homeostasis in Enterococcus hirae.</title>
        <authorList>
            <person name="Odermatt A."/>
            <person name="Suter H."/>
            <person name="Krapf R."/>
            <person name="Solioz M."/>
        </authorList>
    </citation>
    <scope>NUCLEOTIDE SEQUENCE [GENOMIC DNA]</scope>
    <scope>FUNCTION IN COPPER HOMEOSTASIS</scope>
    <source>
        <strain>ATCC 9790 / DSM 20160 / JCM 8729 / LMG 6399 / NBRC 3181 / NCIMB 6459 / NCDO 1258 / NCTC 12367 / WDCM 00089 / R</strain>
    </source>
</reference>
<reference key="2">
    <citation type="journal article" date="2012" name="J. Bacteriol.">
        <title>Genome sequence of Enterococcus hirae (Streptococcus faecalis) ATCC 9790, a model organism for the study of ion transport, bioenergetics, and copper homeostasis.</title>
        <authorList>
            <person name="Gaechter T."/>
            <person name="Wunderlin C."/>
            <person name="Schmidheini T."/>
            <person name="Solioz M."/>
        </authorList>
    </citation>
    <scope>NUCLEOTIDE SEQUENCE [LARGE SCALE GENOMIC DNA]</scope>
    <source>
        <strain>ATCC 9790 / DSM 20160 / JCM 8729 / LMG 6399 / NBRC 3181 / NCIMB 6459 / NCDO 1258 / NCTC 12367 / WDCM 00089 / R</strain>
    </source>
</reference>
<reference key="3">
    <citation type="journal article" date="1987" name="J. Biol. Chem.">
        <title>Cloning of the K+-ATPase of Streptococcus faecalis. Structural and evolutionary implications of its homology to the KdpB-protein of Escherichia coli.</title>
        <authorList>
            <person name="Solioz M."/>
            <person name="Mathews S."/>
            <person name="Fuerst P."/>
        </authorList>
    </citation>
    <scope>NUCLEOTIDE SEQUENCE [GENOMIC DNA] OF 162-745</scope>
</reference>
<reference key="4">
    <citation type="journal article" date="1994" name="Biochem. Biophys. Res. Commun.">
        <title>Induction of the putative copper ATPases, CopA and CopB, of Enterococcus hirae by Ag+ and Cu2+, and Ag+ extrusion by CopB.</title>
        <authorList>
            <person name="Odermatt A."/>
            <person name="Krapf R."/>
            <person name="Solioz M."/>
        </authorList>
    </citation>
    <scope>FUNCTION IN COPPER AND SILVER EXPORT</scope>
    <scope>INDUCTION BY COPPER AND SILVER</scope>
    <source>
        <strain>ATCC 9790 / DSM 20160 / JCM 8729 / LMG 6399 / NBRC 3181 / NCIMB 6459 / NCDO 1258 / NCTC 12367 / WDCM 00089 / R</strain>
    </source>
</reference>
<reference key="5">
    <citation type="journal article" date="1995" name="J. Biol. Chem.">
        <title>Copper and silver transport by CopB-ATPase in membrane vesicles of Enterococcus hirae.</title>
        <authorList>
            <person name="Solioz M."/>
            <person name="Odermatt A."/>
        </authorList>
    </citation>
    <scope>FUNCTION IN COPPER AND SILVER EXPORT</scope>
    <scope>CATALYTIC ACTIVITY</scope>
    <scope>ACTIVITY REGULATION</scope>
    <scope>BIOPHYSICOCHEMICAL PROPERTIES</scope>
    <source>
        <strain>ATCC 9790 / DSM 20160 / JCM 8729 / LMG 6399 / NBRC 3181 / NCIMB 6459 / NCDO 1258 / NCTC 12367 / WDCM 00089 / R</strain>
    </source>
</reference>
<dbReference type="EC" id="7.2.2.8" evidence="4"/>
<dbReference type="EMBL" id="L13292">
    <property type="protein sequence ID" value="AAA61836.1"/>
    <property type="molecule type" value="Genomic_DNA"/>
</dbReference>
<dbReference type="EMBL" id="CP003504">
    <property type="protein sequence ID" value="AFM70730.1"/>
    <property type="molecule type" value="Genomic_DNA"/>
</dbReference>
<dbReference type="PIR" id="B45995">
    <property type="entry name" value="B45995"/>
</dbReference>
<dbReference type="RefSeq" id="WP_010737924.1">
    <property type="nucleotide sequence ID" value="NZ_KB946231.1"/>
</dbReference>
<dbReference type="SMR" id="P05425"/>
<dbReference type="TCDB" id="3.A.3.5.2">
    <property type="family name" value="the p-type atpase (p-atpase) superfamily"/>
</dbReference>
<dbReference type="KEGG" id="ehr:EHR_09090"/>
<dbReference type="eggNOG" id="COG2217">
    <property type="taxonomic scope" value="Bacteria"/>
</dbReference>
<dbReference type="HOGENOM" id="CLU_001771_11_2_9"/>
<dbReference type="OrthoDB" id="9813266at2"/>
<dbReference type="BRENDA" id="7.2.2.8">
    <property type="organism ID" value="2097"/>
</dbReference>
<dbReference type="SABIO-RK" id="P05425"/>
<dbReference type="Proteomes" id="UP000002895">
    <property type="component" value="Chromosome"/>
</dbReference>
<dbReference type="GO" id="GO:0005886">
    <property type="term" value="C:plasma membrane"/>
    <property type="evidence" value="ECO:0007669"/>
    <property type="project" value="UniProtKB-SubCell"/>
</dbReference>
<dbReference type="GO" id="GO:0005524">
    <property type="term" value="F:ATP binding"/>
    <property type="evidence" value="ECO:0007669"/>
    <property type="project" value="UniProtKB-KW"/>
</dbReference>
<dbReference type="GO" id="GO:0016887">
    <property type="term" value="F:ATP hydrolysis activity"/>
    <property type="evidence" value="ECO:0007669"/>
    <property type="project" value="InterPro"/>
</dbReference>
<dbReference type="GO" id="GO:0005507">
    <property type="term" value="F:copper ion binding"/>
    <property type="evidence" value="ECO:0007669"/>
    <property type="project" value="TreeGrafter"/>
</dbReference>
<dbReference type="GO" id="GO:0043682">
    <property type="term" value="F:P-type divalent copper transporter activity"/>
    <property type="evidence" value="ECO:0007669"/>
    <property type="project" value="TreeGrafter"/>
</dbReference>
<dbReference type="GO" id="GO:0140581">
    <property type="term" value="F:P-type monovalent copper transporter activity"/>
    <property type="evidence" value="ECO:0007669"/>
    <property type="project" value="UniProtKB-EC"/>
</dbReference>
<dbReference type="GO" id="GO:0055070">
    <property type="term" value="P:copper ion homeostasis"/>
    <property type="evidence" value="ECO:0007669"/>
    <property type="project" value="TreeGrafter"/>
</dbReference>
<dbReference type="CDD" id="cd07552">
    <property type="entry name" value="P-type_ATPase_Cu-like"/>
    <property type="match status" value="1"/>
</dbReference>
<dbReference type="FunFam" id="2.70.150.10:FF:000020">
    <property type="entry name" value="Copper-exporting P-type ATPase A"/>
    <property type="match status" value="1"/>
</dbReference>
<dbReference type="Gene3D" id="3.40.1110.10">
    <property type="entry name" value="Calcium-transporting ATPase, cytoplasmic domain N"/>
    <property type="match status" value="1"/>
</dbReference>
<dbReference type="Gene3D" id="2.70.150.10">
    <property type="entry name" value="Calcium-transporting ATPase, cytoplasmic transduction domain A"/>
    <property type="match status" value="1"/>
</dbReference>
<dbReference type="Gene3D" id="3.40.50.1000">
    <property type="entry name" value="HAD superfamily/HAD-like"/>
    <property type="match status" value="1"/>
</dbReference>
<dbReference type="InterPro" id="IPR023299">
    <property type="entry name" value="ATPase_P-typ_cyto_dom_N"/>
</dbReference>
<dbReference type="InterPro" id="IPR018303">
    <property type="entry name" value="ATPase_P-typ_P_site"/>
</dbReference>
<dbReference type="InterPro" id="IPR023298">
    <property type="entry name" value="ATPase_P-typ_TM_dom_sf"/>
</dbReference>
<dbReference type="InterPro" id="IPR008250">
    <property type="entry name" value="ATPase_P-typ_transduc_dom_A_sf"/>
</dbReference>
<dbReference type="InterPro" id="IPR036412">
    <property type="entry name" value="HAD-like_sf"/>
</dbReference>
<dbReference type="InterPro" id="IPR023214">
    <property type="entry name" value="HAD_sf"/>
</dbReference>
<dbReference type="InterPro" id="IPR027256">
    <property type="entry name" value="P-typ_ATPase_IB"/>
</dbReference>
<dbReference type="InterPro" id="IPR001757">
    <property type="entry name" value="P_typ_ATPase"/>
</dbReference>
<dbReference type="InterPro" id="IPR044492">
    <property type="entry name" value="P_typ_ATPase_HD_dom"/>
</dbReference>
<dbReference type="NCBIfam" id="TIGR01511">
    <property type="entry name" value="ATPase-IB1_Cu"/>
    <property type="match status" value="1"/>
</dbReference>
<dbReference type="NCBIfam" id="TIGR01512">
    <property type="entry name" value="ATPase-IB2_Cd"/>
    <property type="match status" value="1"/>
</dbReference>
<dbReference type="NCBIfam" id="TIGR01525">
    <property type="entry name" value="ATPase-IB_hvy"/>
    <property type="match status" value="1"/>
</dbReference>
<dbReference type="NCBIfam" id="TIGR01494">
    <property type="entry name" value="ATPase_P-type"/>
    <property type="match status" value="1"/>
</dbReference>
<dbReference type="PANTHER" id="PTHR43520">
    <property type="entry name" value="ATP7, ISOFORM B"/>
    <property type="match status" value="1"/>
</dbReference>
<dbReference type="PANTHER" id="PTHR43520:SF5">
    <property type="entry name" value="CATION-TRANSPORTING P-TYPE ATPASE-RELATED"/>
    <property type="match status" value="1"/>
</dbReference>
<dbReference type="Pfam" id="PF00122">
    <property type="entry name" value="E1-E2_ATPase"/>
    <property type="match status" value="1"/>
</dbReference>
<dbReference type="Pfam" id="PF00702">
    <property type="entry name" value="Hydrolase"/>
    <property type="match status" value="1"/>
</dbReference>
<dbReference type="PRINTS" id="PR00119">
    <property type="entry name" value="CATATPASE"/>
</dbReference>
<dbReference type="PRINTS" id="PR00120">
    <property type="entry name" value="HATPASE"/>
</dbReference>
<dbReference type="SFLD" id="SFLDG00002">
    <property type="entry name" value="C1.7:_P-type_atpase_like"/>
    <property type="match status" value="1"/>
</dbReference>
<dbReference type="SFLD" id="SFLDF00027">
    <property type="entry name" value="p-type_atpase"/>
    <property type="match status" value="1"/>
</dbReference>
<dbReference type="SUPFAM" id="SSF81653">
    <property type="entry name" value="Calcium ATPase, transduction domain A"/>
    <property type="match status" value="1"/>
</dbReference>
<dbReference type="SUPFAM" id="SSF81665">
    <property type="entry name" value="Calcium ATPase, transmembrane domain M"/>
    <property type="match status" value="1"/>
</dbReference>
<dbReference type="SUPFAM" id="SSF56784">
    <property type="entry name" value="HAD-like"/>
    <property type="match status" value="1"/>
</dbReference>
<dbReference type="PROSITE" id="PS00154">
    <property type="entry name" value="ATPASE_E1_E2"/>
    <property type="match status" value="1"/>
</dbReference>
<comment type="function">
    <text evidence="4 5 6">Involved in copper export. Can also export silver.</text>
</comment>
<comment type="catalytic activity">
    <reaction evidence="4">
        <text>Cu(+)(in) + ATP + H2O = Cu(+)(out) + ADP + phosphate + H(+)</text>
        <dbReference type="Rhea" id="RHEA:25792"/>
        <dbReference type="ChEBI" id="CHEBI:15377"/>
        <dbReference type="ChEBI" id="CHEBI:15378"/>
        <dbReference type="ChEBI" id="CHEBI:30616"/>
        <dbReference type="ChEBI" id="CHEBI:43474"/>
        <dbReference type="ChEBI" id="CHEBI:49552"/>
        <dbReference type="ChEBI" id="CHEBI:456216"/>
        <dbReference type="EC" id="7.2.2.8"/>
    </reaction>
</comment>
<comment type="activity regulation">
    <text evidence="4">Inhibited by vanadate.</text>
</comment>
<comment type="biophysicochemical properties">
    <phDependence>
        <text evidence="4">Optimum pH is 6.</text>
    </phDependence>
</comment>
<comment type="subunit">
    <text>Monomer.</text>
</comment>
<comment type="subcellular location">
    <subcellularLocation>
        <location>Cell membrane</location>
        <topology>Multi-pass membrane protein</topology>
    </subcellularLocation>
</comment>
<comment type="induction">
    <text evidence="5">By copper and silver.</text>
</comment>
<comment type="similarity">
    <text evidence="7">Belongs to the cation transport ATPase (P-type) (TC 3.A.3) family. Type IB subfamily.</text>
</comment>
<organism>
    <name type="scientific">Enterococcus hirae (strain ATCC 9790 / DSM 20160 / JCM 8729 / LMG 6399 / NBRC 3181 / NCIMB 6459 / NCDO 1258 / NCTC 12367 / WDCM 00089 / R)</name>
    <dbReference type="NCBI Taxonomy" id="768486"/>
    <lineage>
        <taxon>Bacteria</taxon>
        <taxon>Bacillati</taxon>
        <taxon>Bacillota</taxon>
        <taxon>Bacilli</taxon>
        <taxon>Lactobacillales</taxon>
        <taxon>Enterococcaceae</taxon>
        <taxon>Enterococcus</taxon>
    </lineage>
</organism>
<feature type="chain" id="PRO_0000046251" description="Copper-exporting P-type ATPase B">
    <location>
        <begin position="1"/>
        <end position="745"/>
    </location>
</feature>
<feature type="topological domain" description="Cytoplasmic" evidence="2">
    <location>
        <begin position="1"/>
        <end position="108"/>
    </location>
</feature>
<feature type="transmembrane region" description="Helical" evidence="2">
    <location>
        <begin position="109"/>
        <end position="128"/>
    </location>
</feature>
<feature type="topological domain" description="Extracellular" evidence="2">
    <location>
        <begin position="129"/>
        <end position="139"/>
    </location>
</feature>
<feature type="transmembrane region" description="Helical" evidence="2">
    <location>
        <begin position="140"/>
        <end position="160"/>
    </location>
</feature>
<feature type="topological domain" description="Cytoplasmic" evidence="2">
    <location>
        <begin position="161"/>
        <end position="170"/>
    </location>
</feature>
<feature type="transmembrane region" description="Helical" evidence="2">
    <location>
        <begin position="171"/>
        <end position="191"/>
    </location>
</feature>
<feature type="topological domain" description="Extracellular" evidence="2">
    <location>
        <begin position="192"/>
        <end position="200"/>
    </location>
</feature>
<feature type="transmembrane region" description="Helical" evidence="2">
    <location>
        <begin position="201"/>
        <end position="217"/>
    </location>
</feature>
<feature type="topological domain" description="Cytoplasmic" evidence="2">
    <location>
        <begin position="218"/>
        <end position="359"/>
    </location>
</feature>
<feature type="transmembrane region" description="Helical" evidence="2">
    <location>
        <begin position="360"/>
        <end position="379"/>
    </location>
</feature>
<feature type="topological domain" description="Extracellular" evidence="2">
    <location>
        <begin position="380"/>
        <end position="388"/>
    </location>
</feature>
<feature type="transmembrane region" description="Helical" evidence="2">
    <location>
        <begin position="389"/>
        <end position="409"/>
    </location>
</feature>
<feature type="topological domain" description="Cytoplasmic" evidence="2">
    <location>
        <begin position="410"/>
        <end position="703"/>
    </location>
</feature>
<feature type="transmembrane region" description="Helical" evidence="2">
    <location>
        <begin position="704"/>
        <end position="721"/>
    </location>
</feature>
<feature type="topological domain" description="Extracellular" evidence="2">
    <location>
        <begin position="722"/>
        <end position="723"/>
    </location>
</feature>
<feature type="transmembrane region" description="Helical" evidence="2">
    <location>
        <begin position="724"/>
        <end position="744"/>
    </location>
</feature>
<feature type="topological domain" description="Cytoplasmic" evidence="2">
    <location>
        <position position="745"/>
    </location>
</feature>
<feature type="repeat" description="1">
    <location>
        <begin position="60"/>
        <end position="71"/>
    </location>
</feature>
<feature type="repeat" description="2">
    <location>
        <begin position="73"/>
        <end position="84"/>
    </location>
</feature>
<feature type="repeat" description="3">
    <location>
        <begin position="86"/>
        <end position="97"/>
    </location>
</feature>
<feature type="region of interest" description="Disordered" evidence="3">
    <location>
        <begin position="1"/>
        <end position="76"/>
    </location>
</feature>
<feature type="region of interest" description="3 X 12 AA approximate repeats">
    <location>
        <begin position="60"/>
        <end position="97"/>
    </location>
</feature>
<feature type="compositionally biased region" description="Basic and acidic residues" evidence="3">
    <location>
        <begin position="36"/>
        <end position="76"/>
    </location>
</feature>
<feature type="active site" description="4-aspartylphosphate intermediate" evidence="1">
    <location>
        <position position="440"/>
    </location>
</feature>
<feature type="binding site" evidence="1">
    <location>
        <position position="638"/>
    </location>
    <ligand>
        <name>Mg(2+)</name>
        <dbReference type="ChEBI" id="CHEBI:18420"/>
    </ligand>
</feature>
<feature type="binding site" evidence="1">
    <location>
        <position position="642"/>
    </location>
    <ligand>
        <name>Mg(2+)</name>
        <dbReference type="ChEBI" id="CHEBI:18420"/>
    </ligand>
</feature>
<feature type="sequence conflict" description="In Ref. 3; no nucleotide entry." evidence="7" ref="3">
    <original>N</original>
    <variation>S</variation>
    <location>
        <position position="196"/>
    </location>
</feature>
<feature type="sequence conflict" description="In Ref. 3; no nucleotide entry." evidence="7" ref="3">
    <original>NGYLA</original>
    <variation>MVTC</variation>
    <location>
        <begin position="329"/>
        <end position="333"/>
    </location>
</feature>
<protein>
    <recommendedName>
        <fullName>Copper-exporting P-type ATPase B</fullName>
        <ecNumber evidence="4">7.2.2.8</ecNumber>
    </recommendedName>
    <alternativeName>
        <fullName>Cu(+)-exporting ATPase</fullName>
    </alternativeName>
</protein>
<keyword id="KW-0067">ATP-binding</keyword>
<keyword id="KW-1003">Cell membrane</keyword>
<keyword id="KW-0186">Copper</keyword>
<keyword id="KW-0187">Copper transport</keyword>
<keyword id="KW-0406">Ion transport</keyword>
<keyword id="KW-0460">Magnesium</keyword>
<keyword id="KW-0472">Membrane</keyword>
<keyword id="KW-0479">Metal-binding</keyword>
<keyword id="KW-0547">Nucleotide-binding</keyword>
<keyword id="KW-0597">Phosphoprotein</keyword>
<keyword id="KW-0677">Repeat</keyword>
<keyword id="KW-1278">Translocase</keyword>
<keyword id="KW-0812">Transmembrane</keyword>
<keyword id="KW-1133">Transmembrane helix</keyword>
<keyword id="KW-0813">Transport</keyword>
<accession>P05425</accession>
<accession>I6S229</accession>
<gene>
    <name type="primary">copB</name>
    <name type="ordered locus">EHR_09090</name>
</gene>